<feature type="chain" id="PRO_0000238658" description="Ubiquitin carboxyl-terminal hydrolase MIY1">
    <location>
        <begin position="1"/>
        <end position="360"/>
    </location>
</feature>
<feature type="region of interest" description="Disordered" evidence="2">
    <location>
        <begin position="317"/>
        <end position="360"/>
    </location>
</feature>
<feature type="compositionally biased region" description="Basic and acidic residues" evidence="2">
    <location>
        <begin position="325"/>
        <end position="335"/>
    </location>
</feature>
<feature type="compositionally biased region" description="Basic and acidic residues" evidence="2">
    <location>
        <begin position="349"/>
        <end position="360"/>
    </location>
</feature>
<feature type="active site" description="Nucleophile" evidence="1">
    <location>
        <position position="28"/>
    </location>
</feature>
<feature type="active site" description="Proton acceptor" evidence="1">
    <location>
        <position position="216"/>
    </location>
</feature>
<feature type="site" description="Ubiquitin-binding" evidence="1">
    <location>
        <position position="296"/>
    </location>
</feature>
<feature type="site" description="Ubiquitin-binding" evidence="1">
    <location>
        <begin position="299"/>
        <end position="300"/>
    </location>
</feature>
<feature type="site" description="Ubiquitin-binding" evidence="1">
    <location>
        <position position="303"/>
    </location>
</feature>
<dbReference type="EC" id="3.4.19.12" evidence="5"/>
<dbReference type="EMBL" id="Z73547">
    <property type="protein sequence ID" value="CAA97904.1"/>
    <property type="molecule type" value="Genomic_DNA"/>
</dbReference>
<dbReference type="EMBL" id="BK006949">
    <property type="protein sequence ID" value="DAA11243.1"/>
    <property type="molecule type" value="Genomic_DNA"/>
</dbReference>
<dbReference type="PIR" id="S65210">
    <property type="entry name" value="S65210"/>
</dbReference>
<dbReference type="SMR" id="Q08930"/>
<dbReference type="BioGRID" id="35992">
    <property type="interactions" value="75"/>
</dbReference>
<dbReference type="DIP" id="DIP-2779N"/>
<dbReference type="FunCoup" id="Q08930">
    <property type="interactions" value="215"/>
</dbReference>
<dbReference type="IntAct" id="Q08930">
    <property type="interactions" value="3"/>
</dbReference>
<dbReference type="MINT" id="Q08930"/>
<dbReference type="STRING" id="4932.YPL191C"/>
<dbReference type="iPTMnet" id="Q08930"/>
<dbReference type="PaxDb" id="4932-YPL191C"/>
<dbReference type="PeptideAtlas" id="Q08930"/>
<dbReference type="EnsemblFungi" id="YPL191C_mRNA">
    <property type="protein sequence ID" value="YPL191C"/>
    <property type="gene ID" value="YPL191C"/>
</dbReference>
<dbReference type="KEGG" id="sce:YPL191C"/>
<dbReference type="AGR" id="SGD:S000006112"/>
<dbReference type="SGD" id="S000006112">
    <property type="gene designation" value="YPL191C"/>
</dbReference>
<dbReference type="VEuPathDB" id="FungiDB:YPL191C"/>
<dbReference type="eggNOG" id="KOG2427">
    <property type="taxonomic scope" value="Eukaryota"/>
</dbReference>
<dbReference type="GeneTree" id="ENSGT00390000016607"/>
<dbReference type="HOGENOM" id="CLU_022566_0_0_1"/>
<dbReference type="InParanoid" id="Q08930"/>
<dbReference type="OMA" id="HTRFSNE"/>
<dbReference type="OrthoDB" id="10261212at2759"/>
<dbReference type="BioCyc" id="YEAST:G3O-34084-MONOMER"/>
<dbReference type="BioGRID-ORCS" id="855910">
    <property type="hits" value="0 hits in 10 CRISPR screens"/>
</dbReference>
<dbReference type="PRO" id="PR:Q08930"/>
<dbReference type="Proteomes" id="UP000002311">
    <property type="component" value="Chromosome XVI"/>
</dbReference>
<dbReference type="RNAct" id="Q08930">
    <property type="molecule type" value="protein"/>
</dbReference>
<dbReference type="GO" id="GO:0071944">
    <property type="term" value="C:cell periphery"/>
    <property type="evidence" value="ECO:0007005"/>
    <property type="project" value="SGD"/>
</dbReference>
<dbReference type="GO" id="GO:0005737">
    <property type="term" value="C:cytoplasm"/>
    <property type="evidence" value="ECO:0007005"/>
    <property type="project" value="SGD"/>
</dbReference>
<dbReference type="GO" id="GO:0005783">
    <property type="term" value="C:endoplasmic reticulum"/>
    <property type="evidence" value="ECO:0007005"/>
    <property type="project" value="SGD"/>
</dbReference>
<dbReference type="GO" id="GO:0016807">
    <property type="term" value="F:cysteine-type carboxypeptidase activity"/>
    <property type="evidence" value="ECO:0000314"/>
    <property type="project" value="UniProtKB"/>
</dbReference>
<dbReference type="GO" id="GO:0004843">
    <property type="term" value="F:cysteine-type deubiquitinase activity"/>
    <property type="evidence" value="ECO:0007669"/>
    <property type="project" value="UniProtKB-EC"/>
</dbReference>
<dbReference type="GO" id="GO:1990380">
    <property type="term" value="F:K48-linked deubiquitinase activity"/>
    <property type="evidence" value="ECO:0000314"/>
    <property type="project" value="UniProtKB"/>
</dbReference>
<dbReference type="GO" id="GO:0071444">
    <property type="term" value="P:cellular response to pheromone"/>
    <property type="evidence" value="ECO:0000315"/>
    <property type="project" value="SGD"/>
</dbReference>
<dbReference type="GO" id="GO:0071108">
    <property type="term" value="P:protein K48-linked deubiquitination"/>
    <property type="evidence" value="ECO:0000314"/>
    <property type="project" value="SGD"/>
</dbReference>
<dbReference type="GO" id="GO:0006508">
    <property type="term" value="P:proteolysis"/>
    <property type="evidence" value="ECO:0007669"/>
    <property type="project" value="UniProtKB-KW"/>
</dbReference>
<dbReference type="InterPro" id="IPR007518">
    <property type="entry name" value="MINDY"/>
</dbReference>
<dbReference type="InterPro" id="IPR033979">
    <property type="entry name" value="MINDY_domain"/>
</dbReference>
<dbReference type="PANTHER" id="PTHR18063">
    <property type="entry name" value="NF-E2 INDUCIBLE PROTEIN"/>
    <property type="match status" value="1"/>
</dbReference>
<dbReference type="PANTHER" id="PTHR18063:SF6">
    <property type="entry name" value="UBIQUITIN CARBOXYL-TERMINAL HYDROLASE"/>
    <property type="match status" value="1"/>
</dbReference>
<dbReference type="Pfam" id="PF04424">
    <property type="entry name" value="MINDY_DUB"/>
    <property type="match status" value="1"/>
</dbReference>
<evidence type="ECO:0000250" key="1">
    <source>
        <dbReference type="UniProtKB" id="Q8N5J2"/>
    </source>
</evidence>
<evidence type="ECO:0000256" key="2">
    <source>
        <dbReference type="SAM" id="MobiDB-lite"/>
    </source>
</evidence>
<evidence type="ECO:0000269" key="3">
    <source>
    </source>
</evidence>
<evidence type="ECO:0000269" key="4">
    <source>
    </source>
</evidence>
<evidence type="ECO:0000269" key="5">
    <source>
    </source>
</evidence>
<evidence type="ECO:0000303" key="6">
    <source>
    </source>
</evidence>
<evidence type="ECO:0000305" key="7"/>
<reference key="1">
    <citation type="journal article" date="1997" name="Nature">
        <title>The nucleotide sequence of Saccharomyces cerevisiae chromosome XVI.</title>
        <authorList>
            <person name="Bussey H."/>
            <person name="Storms R.K."/>
            <person name="Ahmed A."/>
            <person name="Albermann K."/>
            <person name="Allen E."/>
            <person name="Ansorge W."/>
            <person name="Araujo R."/>
            <person name="Aparicio A."/>
            <person name="Barrell B.G."/>
            <person name="Badcock K."/>
            <person name="Benes V."/>
            <person name="Botstein D."/>
            <person name="Bowman S."/>
            <person name="Brueckner M."/>
            <person name="Carpenter J."/>
            <person name="Cherry J.M."/>
            <person name="Chung E."/>
            <person name="Churcher C.M."/>
            <person name="Coster F."/>
            <person name="Davis K."/>
            <person name="Davis R.W."/>
            <person name="Dietrich F.S."/>
            <person name="Delius H."/>
            <person name="DiPaolo T."/>
            <person name="Dubois E."/>
            <person name="Duesterhoeft A."/>
            <person name="Duncan M."/>
            <person name="Floeth M."/>
            <person name="Fortin N."/>
            <person name="Friesen J.D."/>
            <person name="Fritz C."/>
            <person name="Goffeau A."/>
            <person name="Hall J."/>
            <person name="Hebling U."/>
            <person name="Heumann K."/>
            <person name="Hilbert H."/>
            <person name="Hillier L.W."/>
            <person name="Hunicke-Smith S."/>
            <person name="Hyman R.W."/>
            <person name="Johnston M."/>
            <person name="Kalman S."/>
            <person name="Kleine K."/>
            <person name="Komp C."/>
            <person name="Kurdi O."/>
            <person name="Lashkari D."/>
            <person name="Lew H."/>
            <person name="Lin A."/>
            <person name="Lin D."/>
            <person name="Louis E.J."/>
            <person name="Marathe R."/>
            <person name="Messenguy F."/>
            <person name="Mewes H.-W."/>
            <person name="Mirtipati S."/>
            <person name="Moestl D."/>
            <person name="Mueller-Auer S."/>
            <person name="Namath A."/>
            <person name="Nentwich U."/>
            <person name="Oefner P."/>
            <person name="Pearson D."/>
            <person name="Petel F.X."/>
            <person name="Pohl T.M."/>
            <person name="Purnelle B."/>
            <person name="Rajandream M.A."/>
            <person name="Rechmann S."/>
            <person name="Rieger M."/>
            <person name="Riles L."/>
            <person name="Roberts D."/>
            <person name="Schaefer M."/>
            <person name="Scharfe M."/>
            <person name="Scherens B."/>
            <person name="Schramm S."/>
            <person name="Schroeder M."/>
            <person name="Sdicu A.-M."/>
            <person name="Tettelin H."/>
            <person name="Urrestarazu L.A."/>
            <person name="Ushinsky S."/>
            <person name="Vierendeels F."/>
            <person name="Vissers S."/>
            <person name="Voss H."/>
            <person name="Walsh S.V."/>
            <person name="Wambutt R."/>
            <person name="Wang Y."/>
            <person name="Wedler E."/>
            <person name="Wedler H."/>
            <person name="Winnett E."/>
            <person name="Zhong W.-W."/>
            <person name="Zollner A."/>
            <person name="Vo D.H."/>
            <person name="Hani J."/>
        </authorList>
    </citation>
    <scope>NUCLEOTIDE SEQUENCE [LARGE SCALE GENOMIC DNA]</scope>
    <source>
        <strain>ATCC 204508 / S288c</strain>
    </source>
</reference>
<reference key="2">
    <citation type="journal article" date="2014" name="G3 (Bethesda)">
        <title>The reference genome sequence of Saccharomyces cerevisiae: Then and now.</title>
        <authorList>
            <person name="Engel S.R."/>
            <person name="Dietrich F.S."/>
            <person name="Fisk D.G."/>
            <person name="Binkley G."/>
            <person name="Balakrishnan R."/>
            <person name="Costanzo M.C."/>
            <person name="Dwight S.S."/>
            <person name="Hitz B.C."/>
            <person name="Karra K."/>
            <person name="Nash R.S."/>
            <person name="Weng S."/>
            <person name="Wong E.D."/>
            <person name="Lloyd P."/>
            <person name="Skrzypek M.S."/>
            <person name="Miyasato S.R."/>
            <person name="Simison M."/>
            <person name="Cherry J.M."/>
        </authorList>
    </citation>
    <scope>GENOME REANNOTATION</scope>
    <source>
        <strain>ATCC 204508 / S288c</strain>
    </source>
</reference>
<reference key="3">
    <citation type="journal article" date="2003" name="Nature">
        <title>Global analysis of protein localization in budding yeast.</title>
        <authorList>
            <person name="Huh W.-K."/>
            <person name="Falvo J.V."/>
            <person name="Gerke L.C."/>
            <person name="Carroll A.S."/>
            <person name="Howson R.W."/>
            <person name="Weissman J.S."/>
            <person name="O'Shea E.K."/>
        </authorList>
    </citation>
    <scope>SUBCELLULAR LOCATION [LARGE SCALE ANALYSIS]</scope>
</reference>
<reference key="4">
    <citation type="journal article" date="2003" name="Nature">
        <title>Global analysis of protein expression in yeast.</title>
        <authorList>
            <person name="Ghaemmaghami S."/>
            <person name="Huh W.-K."/>
            <person name="Bower K."/>
            <person name="Howson R.W."/>
            <person name="Belle A."/>
            <person name="Dephoure N."/>
            <person name="O'Shea E.K."/>
            <person name="Weissman J.S."/>
        </authorList>
    </citation>
    <scope>LEVEL OF PROTEIN EXPRESSION [LARGE SCALE ANALYSIS]</scope>
</reference>
<reference key="5">
    <citation type="journal article" date="2016" name="Mol. Cell">
        <title>MINDY-1 is a member of an evolutionarily conserved and structurally distinct new family of deubiquitinating enzymes.</title>
        <authorList>
            <person name="Abdul Rehman S.A."/>
            <person name="Kristariyanto Y.A."/>
            <person name="Choi S.Y."/>
            <person name="Nkosi P.J."/>
            <person name="Weidlich S."/>
            <person name="Labib K."/>
            <person name="Hofmann K."/>
            <person name="Kulathu Y."/>
        </authorList>
    </citation>
    <scope>FUNCTION</scope>
    <scope>CATALYTIC ACTIVITY</scope>
    <scope>GENE FAMILY</scope>
</reference>
<sequence>MDLSFTTKSVKINGQNHRILLQNENGPCALLALANILILSPDHTRFSNELIRLVNKGSQISLKELIEVLADIALQVTDKPSTDISELLSLLPRLHEGLNINPEFNGSFENTKEMSIFRLFNVDVVHGWVINSFINENIDEKLSHYSYESAQRILTQAADINCGISQDENSDEVLRDAMHLGLFLNESPTQLTAFGLLRLREKLLHNKFSILFRNDHFSTLFKYEDRLYTLVTDFGYKNCKDIVWQSLDSVDGSCDAFFAGNFSAAEVNGQQLSTDIERDFGTGNLLLEEIQQIENDKELAKQLQEQEQERVTKFEAKRKIHSHKKNSEIHAPVKKDKFKRRSSLLNAKASEKEKSECVVM</sequence>
<comment type="function">
    <text evidence="5">Hydrolase that can specifically remove 'Lys-48'-linked conjugated ubiquitin from proteins. Has endodeubiquitinase activity.</text>
</comment>
<comment type="catalytic activity">
    <reaction evidence="5">
        <text>Thiol-dependent hydrolysis of ester, thioester, amide, peptide and isopeptide bonds formed by the C-terminal Gly of ubiquitin (a 76-residue protein attached to proteins as an intracellular targeting signal).</text>
        <dbReference type="EC" id="3.4.19.12"/>
    </reaction>
</comment>
<comment type="subcellular location">
    <subcellularLocation>
        <location evidence="3">Cytoplasm</location>
    </subcellularLocation>
</comment>
<comment type="miscellaneous">
    <text evidence="4">Present with 2050 molecules/cell in log phase SD medium.</text>
</comment>
<comment type="similarity">
    <text evidence="7">Belongs to the MINDY deubiquitinase family. FAM63 subfamily.</text>
</comment>
<protein>
    <recommendedName>
        <fullName evidence="6">Ubiquitin carboxyl-terminal hydrolase MIY1</fullName>
        <ecNumber evidence="5">3.4.19.12</ecNumber>
    </recommendedName>
    <alternativeName>
        <fullName evidence="6">Deubiquitinating enzyme MIY1</fullName>
    </alternativeName>
</protein>
<accession>Q08930</accession>
<accession>D6W3H7</accession>
<organism>
    <name type="scientific">Saccharomyces cerevisiae (strain ATCC 204508 / S288c)</name>
    <name type="common">Baker's yeast</name>
    <dbReference type="NCBI Taxonomy" id="559292"/>
    <lineage>
        <taxon>Eukaryota</taxon>
        <taxon>Fungi</taxon>
        <taxon>Dikarya</taxon>
        <taxon>Ascomycota</taxon>
        <taxon>Saccharomycotina</taxon>
        <taxon>Saccharomycetes</taxon>
        <taxon>Saccharomycetales</taxon>
        <taxon>Saccharomycetaceae</taxon>
        <taxon>Saccharomyces</taxon>
    </lineage>
</organism>
<proteinExistence type="evidence at protein level"/>
<keyword id="KW-0963">Cytoplasm</keyword>
<keyword id="KW-0378">Hydrolase</keyword>
<keyword id="KW-0645">Protease</keyword>
<keyword id="KW-1185">Reference proteome</keyword>
<keyword id="KW-0788">Thiol protease</keyword>
<keyword id="KW-0833">Ubl conjugation pathway</keyword>
<name>YP191_YEAST</name>
<gene>
    <name type="ordered locus">YPL191C</name>
</gene>